<dbReference type="EC" id="2.5.1.6" evidence="4"/>
<dbReference type="EMBL" id="AJ001705">
    <property type="protein sequence ID" value="CAA04941.1"/>
    <property type="molecule type" value="Genomic_DNA"/>
</dbReference>
<dbReference type="EMBL" id="CU329671">
    <property type="protein sequence ID" value="CAA19323.1"/>
    <property type="molecule type" value="Genomic_DNA"/>
</dbReference>
<dbReference type="PIR" id="T39451">
    <property type="entry name" value="T39451"/>
</dbReference>
<dbReference type="RefSeq" id="NP_596731.1">
    <property type="nucleotide sequence ID" value="NM_001022657.2"/>
</dbReference>
<dbReference type="SMR" id="O60198"/>
<dbReference type="BioGRID" id="276487">
    <property type="interactions" value="15"/>
</dbReference>
<dbReference type="FunCoup" id="O60198">
    <property type="interactions" value="682"/>
</dbReference>
<dbReference type="STRING" id="284812.O60198"/>
<dbReference type="iPTMnet" id="O60198"/>
<dbReference type="PaxDb" id="4896-SPBC14F5.05c.1"/>
<dbReference type="EnsemblFungi" id="SPBC14F5.05c.1">
    <property type="protein sequence ID" value="SPBC14F5.05c.1:pep"/>
    <property type="gene ID" value="SPBC14F5.05c"/>
</dbReference>
<dbReference type="GeneID" id="2539943"/>
<dbReference type="KEGG" id="spo:2539943"/>
<dbReference type="PomBase" id="SPBC14F5.05c">
    <property type="gene designation" value="sam1"/>
</dbReference>
<dbReference type="VEuPathDB" id="FungiDB:SPBC14F5.05c"/>
<dbReference type="eggNOG" id="KOG1506">
    <property type="taxonomic scope" value="Eukaryota"/>
</dbReference>
<dbReference type="HOGENOM" id="CLU_041802_0_1_1"/>
<dbReference type="InParanoid" id="O60198"/>
<dbReference type="OMA" id="ASYMARY"/>
<dbReference type="PhylomeDB" id="O60198"/>
<dbReference type="BRENDA" id="2.5.1.6">
    <property type="organism ID" value="5613"/>
</dbReference>
<dbReference type="Reactome" id="R-SPO-156581">
    <property type="pathway name" value="Methylation"/>
</dbReference>
<dbReference type="Reactome" id="R-SPO-1614635">
    <property type="pathway name" value="Sulfur amino acid metabolism"/>
</dbReference>
<dbReference type="Reactome" id="R-SPO-2408508">
    <property type="pathway name" value="Metabolism of ingested SeMet, Sec, MeSec into H2Se"/>
</dbReference>
<dbReference type="UniPathway" id="UPA00315">
    <property type="reaction ID" value="UER00080"/>
</dbReference>
<dbReference type="PRO" id="PR:O60198"/>
<dbReference type="Proteomes" id="UP000002485">
    <property type="component" value="Chromosome II"/>
</dbReference>
<dbReference type="GO" id="GO:0005829">
    <property type="term" value="C:cytosol"/>
    <property type="evidence" value="ECO:0007005"/>
    <property type="project" value="PomBase"/>
</dbReference>
<dbReference type="GO" id="GO:0005634">
    <property type="term" value="C:nucleus"/>
    <property type="evidence" value="ECO:0007005"/>
    <property type="project" value="PomBase"/>
</dbReference>
<dbReference type="GO" id="GO:0005524">
    <property type="term" value="F:ATP binding"/>
    <property type="evidence" value="ECO:0000255"/>
    <property type="project" value="PomBase"/>
</dbReference>
<dbReference type="GO" id="GO:0046872">
    <property type="term" value="F:metal ion binding"/>
    <property type="evidence" value="ECO:0007669"/>
    <property type="project" value="UniProtKB-KW"/>
</dbReference>
<dbReference type="GO" id="GO:0004478">
    <property type="term" value="F:methionine adenosyltransferase activity"/>
    <property type="evidence" value="ECO:0000316"/>
    <property type="project" value="PomBase"/>
</dbReference>
<dbReference type="GO" id="GO:0006555">
    <property type="term" value="P:methionine metabolic process"/>
    <property type="evidence" value="ECO:0000316"/>
    <property type="project" value="PomBase"/>
</dbReference>
<dbReference type="GO" id="GO:0006730">
    <property type="term" value="P:one-carbon metabolic process"/>
    <property type="evidence" value="ECO:0007669"/>
    <property type="project" value="UniProtKB-KW"/>
</dbReference>
<dbReference type="GO" id="GO:0006556">
    <property type="term" value="P:S-adenosylmethionine biosynthetic process"/>
    <property type="evidence" value="ECO:0000318"/>
    <property type="project" value="GO_Central"/>
</dbReference>
<dbReference type="CDD" id="cd18079">
    <property type="entry name" value="S-AdoMet_synt"/>
    <property type="match status" value="1"/>
</dbReference>
<dbReference type="FunFam" id="3.30.300.10:FF:000001">
    <property type="entry name" value="S-adenosylmethionine synthase"/>
    <property type="match status" value="1"/>
</dbReference>
<dbReference type="FunFam" id="3.30.300.10:FF:000003">
    <property type="entry name" value="S-adenosylmethionine synthase"/>
    <property type="match status" value="1"/>
</dbReference>
<dbReference type="FunFam" id="3.30.300.10:FF:000004">
    <property type="entry name" value="S-adenosylmethionine synthase"/>
    <property type="match status" value="1"/>
</dbReference>
<dbReference type="Gene3D" id="3.30.300.10">
    <property type="match status" value="3"/>
</dbReference>
<dbReference type="HAMAP" id="MF_00086">
    <property type="entry name" value="S_AdoMet_synth1"/>
    <property type="match status" value="1"/>
</dbReference>
<dbReference type="InterPro" id="IPR022631">
    <property type="entry name" value="ADOMET_SYNTHASE_CS"/>
</dbReference>
<dbReference type="InterPro" id="IPR022630">
    <property type="entry name" value="S-AdoMet_synt_C"/>
</dbReference>
<dbReference type="InterPro" id="IPR022629">
    <property type="entry name" value="S-AdoMet_synt_central"/>
</dbReference>
<dbReference type="InterPro" id="IPR022628">
    <property type="entry name" value="S-AdoMet_synt_N"/>
</dbReference>
<dbReference type="InterPro" id="IPR002133">
    <property type="entry name" value="S-AdoMet_synthetase"/>
</dbReference>
<dbReference type="InterPro" id="IPR022636">
    <property type="entry name" value="S-AdoMet_synthetase_sfam"/>
</dbReference>
<dbReference type="NCBIfam" id="TIGR01034">
    <property type="entry name" value="metK"/>
    <property type="match status" value="1"/>
</dbReference>
<dbReference type="PANTHER" id="PTHR11964">
    <property type="entry name" value="S-ADENOSYLMETHIONINE SYNTHETASE"/>
    <property type="match status" value="1"/>
</dbReference>
<dbReference type="Pfam" id="PF02773">
    <property type="entry name" value="S-AdoMet_synt_C"/>
    <property type="match status" value="1"/>
</dbReference>
<dbReference type="Pfam" id="PF02772">
    <property type="entry name" value="S-AdoMet_synt_M"/>
    <property type="match status" value="1"/>
</dbReference>
<dbReference type="Pfam" id="PF00438">
    <property type="entry name" value="S-AdoMet_synt_N"/>
    <property type="match status" value="1"/>
</dbReference>
<dbReference type="PIRSF" id="PIRSF000497">
    <property type="entry name" value="MAT"/>
    <property type="match status" value="1"/>
</dbReference>
<dbReference type="SUPFAM" id="SSF55973">
    <property type="entry name" value="S-adenosylmethionine synthetase"/>
    <property type="match status" value="3"/>
</dbReference>
<dbReference type="PROSITE" id="PS00376">
    <property type="entry name" value="ADOMET_SYNTHASE_1"/>
    <property type="match status" value="1"/>
</dbReference>
<dbReference type="PROSITE" id="PS00377">
    <property type="entry name" value="ADOMET_SYNTHASE_2"/>
    <property type="match status" value="1"/>
</dbReference>
<sequence>MAQTFLFTSESVGEGHPDKICDQISDAILDACLKDDPFSKVACETASKTGMVMVFGEITTRSQIDYQKVIRNTIKSIGYDDSEKGFDYKTCNVLVAIEQQSPDIAQGLHYEKALEELGAGDQGIMFGYATDETPEKLPLTILLAHKLNAAMSVARRDGSLPWLRPDTKTQVTIEYEEENGAVIPRRVDTIVVSAQHADSISTEDLRSEILEKIIKPTVPAHLLDEKTVYHIQPSGRFVVGGPQGDAGLTGRKIIVDTYGGWGAHGGGAFSGKDYSKVDRSAAYAARWIAKSLVAAGLARRCLVQLSYAIGVAEPLSIFVNTYGTSSKTSAELVEIIRKNFDLRPGVLVKSLKLQTPFYLSTASYGHFTDQSKPWEQPKELKF</sequence>
<organism>
    <name type="scientific">Schizosaccharomyces pombe (strain 972 / ATCC 24843)</name>
    <name type="common">Fission yeast</name>
    <dbReference type="NCBI Taxonomy" id="284812"/>
    <lineage>
        <taxon>Eukaryota</taxon>
        <taxon>Fungi</taxon>
        <taxon>Dikarya</taxon>
        <taxon>Ascomycota</taxon>
        <taxon>Taphrinomycotina</taxon>
        <taxon>Schizosaccharomycetes</taxon>
        <taxon>Schizosaccharomycetales</taxon>
        <taxon>Schizosaccharomycetaceae</taxon>
        <taxon>Schizosaccharomyces</taxon>
    </lineage>
</organism>
<reference key="1">
    <citation type="journal article" date="2000" name="Yeast">
        <title>Gene sam1 encoding adenosylmethionine synthetase: effects of its expression in the fission yeast Schizosaccharomyces pombe.</title>
        <authorList>
            <person name="Hilti N."/>
            <person name="Graeub R."/>
            <person name="Joerg M."/>
            <person name="Arnold P."/>
            <person name="Schweingruber A.-M."/>
            <person name="Schweingruber M.E."/>
        </authorList>
    </citation>
    <scope>NUCLEOTIDE SEQUENCE [GENOMIC DNA]</scope>
    <scope>FUNCTION</scope>
    <scope>CATALYTIC ACTIVITY</scope>
    <scope>PATHWAY</scope>
</reference>
<reference key="2">
    <citation type="journal article" date="2002" name="Nature">
        <title>The genome sequence of Schizosaccharomyces pombe.</title>
        <authorList>
            <person name="Wood V."/>
            <person name="Gwilliam R."/>
            <person name="Rajandream M.A."/>
            <person name="Lyne M.H."/>
            <person name="Lyne R."/>
            <person name="Stewart A."/>
            <person name="Sgouros J.G."/>
            <person name="Peat N."/>
            <person name="Hayles J."/>
            <person name="Baker S.G."/>
            <person name="Basham D."/>
            <person name="Bowman S."/>
            <person name="Brooks K."/>
            <person name="Brown D."/>
            <person name="Brown S."/>
            <person name="Chillingworth T."/>
            <person name="Churcher C.M."/>
            <person name="Collins M."/>
            <person name="Connor R."/>
            <person name="Cronin A."/>
            <person name="Davis P."/>
            <person name="Feltwell T."/>
            <person name="Fraser A."/>
            <person name="Gentles S."/>
            <person name="Goble A."/>
            <person name="Hamlin N."/>
            <person name="Harris D.E."/>
            <person name="Hidalgo J."/>
            <person name="Hodgson G."/>
            <person name="Holroyd S."/>
            <person name="Hornsby T."/>
            <person name="Howarth S."/>
            <person name="Huckle E.J."/>
            <person name="Hunt S."/>
            <person name="Jagels K."/>
            <person name="James K.D."/>
            <person name="Jones L."/>
            <person name="Jones M."/>
            <person name="Leather S."/>
            <person name="McDonald S."/>
            <person name="McLean J."/>
            <person name="Mooney P."/>
            <person name="Moule S."/>
            <person name="Mungall K.L."/>
            <person name="Murphy L.D."/>
            <person name="Niblett D."/>
            <person name="Odell C."/>
            <person name="Oliver K."/>
            <person name="O'Neil S."/>
            <person name="Pearson D."/>
            <person name="Quail M.A."/>
            <person name="Rabbinowitsch E."/>
            <person name="Rutherford K.M."/>
            <person name="Rutter S."/>
            <person name="Saunders D."/>
            <person name="Seeger K."/>
            <person name="Sharp S."/>
            <person name="Skelton J."/>
            <person name="Simmonds M.N."/>
            <person name="Squares R."/>
            <person name="Squares S."/>
            <person name="Stevens K."/>
            <person name="Taylor K."/>
            <person name="Taylor R.G."/>
            <person name="Tivey A."/>
            <person name="Walsh S.V."/>
            <person name="Warren T."/>
            <person name="Whitehead S."/>
            <person name="Woodward J.R."/>
            <person name="Volckaert G."/>
            <person name="Aert R."/>
            <person name="Robben J."/>
            <person name="Grymonprez B."/>
            <person name="Weltjens I."/>
            <person name="Vanstreels E."/>
            <person name="Rieger M."/>
            <person name="Schaefer M."/>
            <person name="Mueller-Auer S."/>
            <person name="Gabel C."/>
            <person name="Fuchs M."/>
            <person name="Duesterhoeft A."/>
            <person name="Fritzc C."/>
            <person name="Holzer E."/>
            <person name="Moestl D."/>
            <person name="Hilbert H."/>
            <person name="Borzym K."/>
            <person name="Langer I."/>
            <person name="Beck A."/>
            <person name="Lehrach H."/>
            <person name="Reinhardt R."/>
            <person name="Pohl T.M."/>
            <person name="Eger P."/>
            <person name="Zimmermann W."/>
            <person name="Wedler H."/>
            <person name="Wambutt R."/>
            <person name="Purnelle B."/>
            <person name="Goffeau A."/>
            <person name="Cadieu E."/>
            <person name="Dreano S."/>
            <person name="Gloux S."/>
            <person name="Lelaure V."/>
            <person name="Mottier S."/>
            <person name="Galibert F."/>
            <person name="Aves S.J."/>
            <person name="Xiang Z."/>
            <person name="Hunt C."/>
            <person name="Moore K."/>
            <person name="Hurst S.M."/>
            <person name="Lucas M."/>
            <person name="Rochet M."/>
            <person name="Gaillardin C."/>
            <person name="Tallada V.A."/>
            <person name="Garzon A."/>
            <person name="Thode G."/>
            <person name="Daga R.R."/>
            <person name="Cruzado L."/>
            <person name="Jimenez J."/>
            <person name="Sanchez M."/>
            <person name="del Rey F."/>
            <person name="Benito J."/>
            <person name="Dominguez A."/>
            <person name="Revuelta J.L."/>
            <person name="Moreno S."/>
            <person name="Armstrong J."/>
            <person name="Forsburg S.L."/>
            <person name="Cerutti L."/>
            <person name="Lowe T."/>
            <person name="McCombie W.R."/>
            <person name="Paulsen I."/>
            <person name="Potashkin J."/>
            <person name="Shpakovski G.V."/>
            <person name="Ussery D."/>
            <person name="Barrell B.G."/>
            <person name="Nurse P."/>
        </authorList>
    </citation>
    <scope>NUCLEOTIDE SEQUENCE [LARGE SCALE GENOMIC DNA]</scope>
    <source>
        <strain>972 / ATCC 24843</strain>
    </source>
</reference>
<protein>
    <recommendedName>
        <fullName>S-adenosylmethionine synthase</fullName>
        <shortName>AdoMet synthase</shortName>
        <ecNumber evidence="4">2.5.1.6</ecNumber>
    </recommendedName>
    <alternativeName>
        <fullName>Methionine adenosyltransferase</fullName>
        <shortName>MAT</shortName>
    </alternativeName>
</protein>
<gene>
    <name type="primary">sam1</name>
    <name type="ORF">SPBC14F5.05c</name>
</gene>
<proteinExistence type="evidence at protein level"/>
<comment type="function">
    <text evidence="4">Catalyzes the formation of S-adenosylmethionine from methionine and ATP. The reaction comprises two steps that are both catalyzed by the same enzyme: formation of S-adenosylmethionine (AdoMet) and triphosphate, and subsequent hydrolysis of the triphosphate.</text>
</comment>
<comment type="catalytic activity">
    <reaction evidence="4">
        <text>L-methionine + ATP + H2O = S-adenosyl-L-methionine + phosphate + diphosphate</text>
        <dbReference type="Rhea" id="RHEA:21080"/>
        <dbReference type="ChEBI" id="CHEBI:15377"/>
        <dbReference type="ChEBI" id="CHEBI:30616"/>
        <dbReference type="ChEBI" id="CHEBI:33019"/>
        <dbReference type="ChEBI" id="CHEBI:43474"/>
        <dbReference type="ChEBI" id="CHEBI:57844"/>
        <dbReference type="ChEBI" id="CHEBI:59789"/>
        <dbReference type="EC" id="2.5.1.6"/>
    </reaction>
</comment>
<comment type="cofactor">
    <cofactor evidence="2">
        <name>Mg(2+)</name>
        <dbReference type="ChEBI" id="CHEBI:18420"/>
    </cofactor>
    <text evidence="2">Binds 2 magnesium ions per subunit. The magnesium ions interact primarily with the substrate.</text>
</comment>
<comment type="cofactor">
    <cofactor evidence="2">
        <name>K(+)</name>
        <dbReference type="ChEBI" id="CHEBI:29103"/>
    </cofactor>
    <text evidence="2">Binds 1 potassium ion per subunit. The potassium ion interacts primarily with the substrate.</text>
</comment>
<comment type="pathway">
    <text evidence="4">Amino-acid biosynthesis; S-adenosyl-L-methionine biosynthesis; S-adenosyl-L-methionine from L-methionine: step 1/1.</text>
</comment>
<comment type="similarity">
    <text evidence="5">Belongs to the AdoMet synthase family.</text>
</comment>
<feature type="chain" id="PRO_0000174450" description="S-adenosylmethionine synthase">
    <location>
        <begin position="1"/>
        <end position="382"/>
    </location>
</feature>
<feature type="binding site" evidence="2">
    <location>
        <position position="10"/>
    </location>
    <ligand>
        <name>Mg(2+)</name>
        <dbReference type="ChEBI" id="CHEBI:18420"/>
    </ligand>
</feature>
<feature type="binding site" description="in other chain" evidence="3">
    <location>
        <position position="16"/>
    </location>
    <ligand>
        <name>ATP</name>
        <dbReference type="ChEBI" id="CHEBI:30616"/>
        <note>ligand shared between two neighboring subunits</note>
    </ligand>
</feature>
<feature type="binding site" evidence="1">
    <location>
        <position position="44"/>
    </location>
    <ligand>
        <name>K(+)</name>
        <dbReference type="ChEBI" id="CHEBI:29103"/>
    </ligand>
</feature>
<feature type="binding site" description="in other chain" evidence="1">
    <location>
        <position position="57"/>
    </location>
    <ligand>
        <name>L-methionine</name>
        <dbReference type="ChEBI" id="CHEBI:57844"/>
        <note>ligand shared between two neighboring subunits</note>
    </ligand>
</feature>
<feature type="binding site" description="in other chain" evidence="1">
    <location>
        <position position="100"/>
    </location>
    <ligand>
        <name>L-methionine</name>
        <dbReference type="ChEBI" id="CHEBI:57844"/>
        <note>ligand shared between two neighboring subunits</note>
    </ligand>
</feature>
<feature type="binding site" description="in other chain" evidence="3">
    <location>
        <begin position="166"/>
        <end position="168"/>
    </location>
    <ligand>
        <name>ATP</name>
        <dbReference type="ChEBI" id="CHEBI:30616"/>
        <note>ligand shared between two neighboring subunits</note>
    </ligand>
</feature>
<feature type="binding site" description="in other chain" evidence="3">
    <location>
        <begin position="234"/>
        <end position="237"/>
    </location>
    <ligand>
        <name>ATP</name>
        <dbReference type="ChEBI" id="CHEBI:30616"/>
        <note>ligand shared between two neighboring subunits</note>
    </ligand>
</feature>
<feature type="binding site" description="in other chain" evidence="3">
    <location>
        <position position="245"/>
    </location>
    <ligand>
        <name>ATP</name>
        <dbReference type="ChEBI" id="CHEBI:30616"/>
        <note>ligand shared between two neighboring subunits</note>
    </ligand>
</feature>
<feature type="binding site" evidence="1">
    <location>
        <position position="245"/>
    </location>
    <ligand>
        <name>L-methionine</name>
        <dbReference type="ChEBI" id="CHEBI:57844"/>
        <note>ligand shared between two neighboring subunits</note>
    </ligand>
</feature>
<feature type="binding site" description="in other chain" evidence="1">
    <location>
        <begin position="251"/>
        <end position="252"/>
    </location>
    <ligand>
        <name>ATP</name>
        <dbReference type="ChEBI" id="CHEBI:30616"/>
        <note>ligand shared between two neighboring subunits</note>
    </ligand>
</feature>
<feature type="binding site" evidence="1">
    <location>
        <position position="268"/>
    </location>
    <ligand>
        <name>ATP</name>
        <dbReference type="ChEBI" id="CHEBI:30616"/>
        <note>ligand shared between two neighboring subunits</note>
    </ligand>
</feature>
<feature type="binding site" evidence="1">
    <location>
        <position position="272"/>
    </location>
    <ligand>
        <name>ATP</name>
        <dbReference type="ChEBI" id="CHEBI:30616"/>
        <note>ligand shared between two neighboring subunits</note>
    </ligand>
</feature>
<feature type="binding site" evidence="2">
    <location>
        <position position="276"/>
    </location>
    <ligand>
        <name>ATP</name>
        <dbReference type="ChEBI" id="CHEBI:30616"/>
        <note>ligand shared between two neighboring subunits</note>
    </ligand>
</feature>
<feature type="binding site" description="in other chain" evidence="1">
    <location>
        <position position="276"/>
    </location>
    <ligand>
        <name>L-methionine</name>
        <dbReference type="ChEBI" id="CHEBI:57844"/>
        <note>ligand shared between two neighboring subunits</note>
    </ligand>
</feature>
<name>METK_SCHPO</name>
<accession>O60198</accession>
<evidence type="ECO:0000250" key="1">
    <source>
        <dbReference type="UniProtKB" id="P0A817"/>
    </source>
</evidence>
<evidence type="ECO:0000250" key="2">
    <source>
        <dbReference type="UniProtKB" id="P13444"/>
    </source>
</evidence>
<evidence type="ECO:0000250" key="3">
    <source>
        <dbReference type="UniProtKB" id="Q00266"/>
    </source>
</evidence>
<evidence type="ECO:0000269" key="4">
    <source>
    </source>
</evidence>
<evidence type="ECO:0000305" key="5"/>
<keyword id="KW-0067">ATP-binding</keyword>
<keyword id="KW-0460">Magnesium</keyword>
<keyword id="KW-0479">Metal-binding</keyword>
<keyword id="KW-0547">Nucleotide-binding</keyword>
<keyword id="KW-0554">One-carbon metabolism</keyword>
<keyword id="KW-0630">Potassium</keyword>
<keyword id="KW-1185">Reference proteome</keyword>
<keyword id="KW-0808">Transferase</keyword>